<reference key="1">
    <citation type="journal article" date="2014" name="PLoS Genet.">
        <title>Analysis of the genome and transcriptome of Cryptococcus neoformans var. grubii reveals complex RNA expression and microevolution leading to virulence attenuation.</title>
        <authorList>
            <person name="Janbon G."/>
            <person name="Ormerod K.L."/>
            <person name="Paulet D."/>
            <person name="Byrnes E.J. III"/>
            <person name="Yadav V."/>
            <person name="Chatterjee G."/>
            <person name="Mullapudi N."/>
            <person name="Hon C.-C."/>
            <person name="Billmyre R.B."/>
            <person name="Brunel F."/>
            <person name="Bahn Y.-S."/>
            <person name="Chen W."/>
            <person name="Chen Y."/>
            <person name="Chow E.W.L."/>
            <person name="Coppee J.-Y."/>
            <person name="Floyd-Averette A."/>
            <person name="Gaillardin C."/>
            <person name="Gerik K.J."/>
            <person name="Goldberg J."/>
            <person name="Gonzalez-Hilarion S."/>
            <person name="Gujja S."/>
            <person name="Hamlin J.L."/>
            <person name="Hsueh Y.-P."/>
            <person name="Ianiri G."/>
            <person name="Jones S."/>
            <person name="Kodira C.D."/>
            <person name="Kozubowski L."/>
            <person name="Lam W."/>
            <person name="Marra M."/>
            <person name="Mesner L.D."/>
            <person name="Mieczkowski P.A."/>
            <person name="Moyrand F."/>
            <person name="Nielsen K."/>
            <person name="Proux C."/>
            <person name="Rossignol T."/>
            <person name="Schein J.E."/>
            <person name="Sun S."/>
            <person name="Wollschlaeger C."/>
            <person name="Wood I.A."/>
            <person name="Zeng Q."/>
            <person name="Neuveglise C."/>
            <person name="Newlon C.S."/>
            <person name="Perfect J.R."/>
            <person name="Lodge J.K."/>
            <person name="Idnurm A."/>
            <person name="Stajich J.E."/>
            <person name="Kronstad J.W."/>
            <person name="Sanyal K."/>
            <person name="Heitman J."/>
            <person name="Fraser J.A."/>
            <person name="Cuomo C.A."/>
            <person name="Dietrich F.S."/>
        </authorList>
    </citation>
    <scope>NUCLEOTIDE SEQUENCE [LARGE SCALE GENOMIC DNA]</scope>
    <source>
        <strain>H99 / ATCC 208821 / CBS 10515 / FGSC 9487</strain>
    </source>
</reference>
<reference key="2">
    <citation type="journal article" date="2004" name="Yeast">
        <title>An efficiently regulated promoter system for Cryptococcus neoformans utilizing the CTR4 promoter.</title>
        <authorList>
            <person name="Ory J.J."/>
            <person name="Griffith C.L."/>
            <person name="Doering T.L."/>
        </authorList>
    </citation>
    <scope>INDUCTION</scope>
    <scope>BIOTECHNOLOGY</scope>
</reference>
<reference key="3">
    <citation type="journal article" date="2007" name="J. Clin. Invest.">
        <title>Role of a CUF1/CTR4 copper regulatory axis in the virulence of Cryptococcus neoformans.</title>
        <authorList>
            <person name="Waterman S.R."/>
            <person name="Hacham M."/>
            <person name="Hu G."/>
            <person name="Zhu X."/>
            <person name="Park Y.D."/>
            <person name="Shin S."/>
            <person name="Panepinto J."/>
            <person name="Valyi-Nagy T."/>
            <person name="Beam C."/>
            <person name="Husain S."/>
            <person name="Singh N."/>
            <person name="Williamson P.R."/>
        </authorList>
    </citation>
    <scope>INDUCTION</scope>
    <scope>FUNCTION</scope>
</reference>
<reference key="4">
    <citation type="journal article" date="2012" name="MBio">
        <title>Role of CTR4 in the virulence of Cryptococcus neoformans.</title>
        <authorList>
            <person name="Waterman S.R."/>
            <person name="Park Y.D."/>
            <person name="Raja M."/>
            <person name="Qiu J."/>
            <person name="Hammoud D.A."/>
            <person name="O'Halloran T.V."/>
            <person name="Williamson P.R."/>
        </authorList>
    </citation>
    <scope>FUNCTION</scope>
    <scope>DISRUPTION PHENOTYPE</scope>
</reference>
<reference key="5">
    <citation type="journal article" date="2022" name="MSphere">
        <title>FKS1 Is Required for Cryptococcus neoformans Fitness In Vivo: Application of Copper-Regulated Gene Expression to Mouse Models of Cryptococcosis.</title>
        <authorList>
            <person name="Beattie S.R."/>
            <person name="Jezewski A.J."/>
            <person name="Ristow L.C."/>
            <person name="Wellington M."/>
            <person name="Krysan D.J."/>
        </authorList>
    </citation>
    <scope>INDUCTION</scope>
</reference>
<sequence length="199" mass="21810">MDMGNMGMGMGMGMDSGHNHSHMNMGSGHGADSGHACRISMLLNFNTVDACFLSPNWHIRSKGMFAGSIIGIFFLCVLIELIRRLGREFDRWLVKRAGVNSTCGELSSVAEYGKDGAQGGAVVRVAPRFRYVPSWPHQILRGFIYGSQFTAAFFVMLLGMYFNVIVLIFIFLGQTVGYMLFGRDTCGGGFDFGAQGRCC</sequence>
<proteinExistence type="evidence at protein level"/>
<feature type="chain" id="PRO_0000436050" description="Copper transport protein CTR4">
    <location>
        <begin position="1"/>
        <end position="199"/>
    </location>
</feature>
<feature type="transmembrane region" description="Helical" evidence="2">
    <location>
        <begin position="62"/>
        <end position="82"/>
    </location>
</feature>
<feature type="transmembrane region" description="Helical" evidence="2">
    <location>
        <begin position="152"/>
        <end position="172"/>
    </location>
</feature>
<comment type="function">
    <text evidence="1 4 5">Required for high affinity copper (probably reduced Cu I) transport into the cell (By similarity). Plays a role in fungal pathogenesis during host infection (PubMed:17290306, PubMed:23033470).</text>
</comment>
<comment type="subcellular location">
    <subcellularLocation>
        <location evidence="2">Membrane</location>
        <topology evidence="2">Multi-pass membrane protein</topology>
    </subcellularLocation>
</comment>
<comment type="induction">
    <text evidence="3 4 6">Expression is highly induced by the CUF1 copper regulatory factor in response to copper deprivation and repressed in presence of physiologically low concentrations of copper (PubMed:15334556, PubMed:17290306). Expressed at high levels after phagocytosis by macrophage-like cells and during infection of mouse brains, but only at low levels in lungs, consistent with limited copper availability during neurologic infection (PubMed:17290306, PubMed:35506343).</text>
</comment>
<comment type="disruption phenotype">
    <text evidence="5">Exhibits a significant reduction in survival in macrophages after activation with gamma interferon (PubMed:23033470).</text>
</comment>
<comment type="biotechnology">
    <text evidence="3">The CTR4 copper-sensing promoter can be used to construct plasmids that offer efficient and regulated expression in C.neoformans (PubMed:15334556).</text>
</comment>
<comment type="similarity">
    <text evidence="8">Belongs to the copper transporter (Ctr) (TC 1.A.56) family. SLC31A subfamily.</text>
</comment>
<gene>
    <name evidence="7" type="primary">CTR4</name>
    <name type="ORF">CNAG_00979</name>
</gene>
<evidence type="ECO:0000250" key="1">
    <source>
        <dbReference type="UniProtKB" id="O94722"/>
    </source>
</evidence>
<evidence type="ECO:0000255" key="2"/>
<evidence type="ECO:0000269" key="3">
    <source>
    </source>
</evidence>
<evidence type="ECO:0000269" key="4">
    <source>
    </source>
</evidence>
<evidence type="ECO:0000269" key="5">
    <source>
    </source>
</evidence>
<evidence type="ECO:0000269" key="6">
    <source>
    </source>
</evidence>
<evidence type="ECO:0000303" key="7">
    <source>
    </source>
</evidence>
<evidence type="ECO:0000305" key="8"/>
<keyword id="KW-0472">Membrane</keyword>
<keyword id="KW-0812">Transmembrane</keyword>
<keyword id="KW-1133">Transmembrane helix</keyword>
<organism>
    <name type="scientific">Cryptococcus neoformans var. grubii serotype A (strain H99 / ATCC 208821 / CBS 10515 / FGSC 9487)</name>
    <name type="common">Filobasidiella neoformans var. grubii</name>
    <dbReference type="NCBI Taxonomy" id="235443"/>
    <lineage>
        <taxon>Eukaryota</taxon>
        <taxon>Fungi</taxon>
        <taxon>Dikarya</taxon>
        <taxon>Basidiomycota</taxon>
        <taxon>Agaricomycotina</taxon>
        <taxon>Tremellomycetes</taxon>
        <taxon>Tremellales</taxon>
        <taxon>Cryptococcaceae</taxon>
        <taxon>Cryptococcus</taxon>
        <taxon>Cryptococcus neoformans species complex</taxon>
    </lineage>
</organism>
<dbReference type="EMBL" id="CP003824">
    <property type="protein sequence ID" value="AFR95168.2"/>
    <property type="molecule type" value="Genomic_DNA"/>
</dbReference>
<dbReference type="RefSeq" id="XP_012049107.1">
    <property type="nucleotide sequence ID" value="XM_012193717.1"/>
</dbReference>
<dbReference type="GeneID" id="23884725"/>
<dbReference type="KEGG" id="cng:CNAG_00979"/>
<dbReference type="VEuPathDB" id="FungiDB:CNAG_00979"/>
<dbReference type="OrthoDB" id="869at5206"/>
<dbReference type="PHI-base" id="PHI:9962"/>
<dbReference type="Proteomes" id="UP000010091">
    <property type="component" value="Chromosome 5"/>
</dbReference>
<dbReference type="GO" id="GO:0016020">
    <property type="term" value="C:membrane"/>
    <property type="evidence" value="ECO:0007669"/>
    <property type="project" value="UniProtKB-SubCell"/>
</dbReference>
<dbReference type="GO" id="GO:0005375">
    <property type="term" value="F:copper ion transmembrane transporter activity"/>
    <property type="evidence" value="ECO:0007669"/>
    <property type="project" value="InterPro"/>
</dbReference>
<dbReference type="InterPro" id="IPR007274">
    <property type="entry name" value="Cop_transporter"/>
</dbReference>
<dbReference type="PANTHER" id="PTHR12483:SF73">
    <property type="entry name" value="COPPER TRANSPORT PROTEIN CTR3"/>
    <property type="match status" value="1"/>
</dbReference>
<dbReference type="PANTHER" id="PTHR12483">
    <property type="entry name" value="SOLUTE CARRIER FAMILY 31 COPPER TRANSPORTERS"/>
    <property type="match status" value="1"/>
</dbReference>
<dbReference type="Pfam" id="PF04145">
    <property type="entry name" value="Ctr"/>
    <property type="match status" value="1"/>
</dbReference>
<name>CTR4_CRYNH</name>
<protein>
    <recommendedName>
        <fullName evidence="8">Copper transport protein CTR4</fullName>
        <shortName evidence="8">Copper transporter 4</shortName>
    </recommendedName>
</protein>
<accession>J9VLN4</accession>